<organism>
    <name type="scientific">Aspergillus oryzae (strain ATCC 42149 / RIB 40)</name>
    <name type="common">Yellow koji mold</name>
    <dbReference type="NCBI Taxonomy" id="510516"/>
    <lineage>
        <taxon>Eukaryota</taxon>
        <taxon>Fungi</taxon>
        <taxon>Dikarya</taxon>
        <taxon>Ascomycota</taxon>
        <taxon>Pezizomycotina</taxon>
        <taxon>Eurotiomycetes</taxon>
        <taxon>Eurotiomycetidae</taxon>
        <taxon>Eurotiales</taxon>
        <taxon>Aspergillaceae</taxon>
        <taxon>Aspergillus</taxon>
        <taxon>Aspergillus subgen. Circumdati</taxon>
    </lineage>
</organism>
<sequence>MAPITEEAVSGLKDIIGKLEARVEELESRLSNGFKPKSVAEHMRMVLMGPPGAGKGTQAPALKDKYCVCHLATGDMLRSQVAKKTELGKEAKKIMDQGGLVSDEIMVNMIKSELDNNSECKNGFILDGFPRTVAQAERLDDMLAARQQKLQHAVELQIDDALLVARITGRLVHPASGRSYHKVFNPPKQEMKDDITGEPLIQRSDDNAETLKKRLGTYHAQTAPVVDYYKKTGIWRGIDASQEPGQVWKSLLGVFQQN</sequence>
<accession>Q2UBH0</accession>
<name>KAD2_ASPOR</name>
<dbReference type="EC" id="2.7.4.3" evidence="1"/>
<dbReference type="EMBL" id="BA000052">
    <property type="protein sequence ID" value="BAE61095.1"/>
    <property type="status" value="ALT_INIT"/>
    <property type="molecule type" value="Genomic_DNA"/>
</dbReference>
<dbReference type="RefSeq" id="XP_001727934.2">
    <property type="nucleotide sequence ID" value="XM_001727882.2"/>
</dbReference>
<dbReference type="SMR" id="Q2UBH0"/>
<dbReference type="STRING" id="510516.Q2UBH0"/>
<dbReference type="EnsemblFungi" id="BAE61095">
    <property type="protein sequence ID" value="BAE61095"/>
    <property type="gene ID" value="AO090012001004"/>
</dbReference>
<dbReference type="GeneID" id="5988408"/>
<dbReference type="KEGG" id="aor:AO090012001004"/>
<dbReference type="VEuPathDB" id="FungiDB:AO090012001004"/>
<dbReference type="OMA" id="VYHEQTA"/>
<dbReference type="Proteomes" id="UP000006564">
    <property type="component" value="Chromosome 4"/>
</dbReference>
<dbReference type="GO" id="GO:0005829">
    <property type="term" value="C:cytosol"/>
    <property type="evidence" value="ECO:0007669"/>
    <property type="project" value="UniProtKB-SubCell"/>
</dbReference>
<dbReference type="GO" id="GO:0005758">
    <property type="term" value="C:mitochondrial intermembrane space"/>
    <property type="evidence" value="ECO:0007669"/>
    <property type="project" value="UniProtKB-SubCell"/>
</dbReference>
<dbReference type="GO" id="GO:0004017">
    <property type="term" value="F:adenylate kinase activity"/>
    <property type="evidence" value="ECO:0007669"/>
    <property type="project" value="UniProtKB-UniRule"/>
</dbReference>
<dbReference type="GO" id="GO:0016208">
    <property type="term" value="F:AMP binding"/>
    <property type="evidence" value="ECO:0007669"/>
    <property type="project" value="EnsemblFungi"/>
</dbReference>
<dbReference type="GO" id="GO:0005524">
    <property type="term" value="F:ATP binding"/>
    <property type="evidence" value="ECO:0007669"/>
    <property type="project" value="UniProtKB-KW"/>
</dbReference>
<dbReference type="GO" id="GO:0003688">
    <property type="term" value="F:DNA replication origin binding"/>
    <property type="evidence" value="ECO:0007669"/>
    <property type="project" value="EnsemblFungi"/>
</dbReference>
<dbReference type="GO" id="GO:0006172">
    <property type="term" value="P:ADP biosynthetic process"/>
    <property type="evidence" value="ECO:0007669"/>
    <property type="project" value="UniProtKB-UniRule"/>
</dbReference>
<dbReference type="GO" id="GO:0046033">
    <property type="term" value="P:AMP metabolic process"/>
    <property type="evidence" value="ECO:0007669"/>
    <property type="project" value="UniProtKB-UniRule"/>
</dbReference>
<dbReference type="GO" id="GO:0046034">
    <property type="term" value="P:ATP metabolic process"/>
    <property type="evidence" value="ECO:0007669"/>
    <property type="project" value="UniProtKB-UniRule"/>
</dbReference>
<dbReference type="GO" id="GO:0006270">
    <property type="term" value="P:DNA replication initiation"/>
    <property type="evidence" value="ECO:0007669"/>
    <property type="project" value="EnsemblFungi"/>
</dbReference>
<dbReference type="GO" id="GO:0036388">
    <property type="term" value="P:pre-replicative complex assembly"/>
    <property type="evidence" value="ECO:0007669"/>
    <property type="project" value="EnsemblFungi"/>
</dbReference>
<dbReference type="CDD" id="cd01428">
    <property type="entry name" value="ADK"/>
    <property type="match status" value="1"/>
</dbReference>
<dbReference type="FunFam" id="3.40.50.300:FF:000106">
    <property type="entry name" value="Adenylate kinase mitochondrial"/>
    <property type="match status" value="1"/>
</dbReference>
<dbReference type="Gene3D" id="3.40.50.300">
    <property type="entry name" value="P-loop containing nucleotide triphosphate hydrolases"/>
    <property type="match status" value="1"/>
</dbReference>
<dbReference type="HAMAP" id="MF_00235">
    <property type="entry name" value="Adenylate_kinase_Adk"/>
    <property type="match status" value="1"/>
</dbReference>
<dbReference type="HAMAP" id="MF_03168">
    <property type="entry name" value="Adenylate_kinase_AK2"/>
    <property type="match status" value="1"/>
</dbReference>
<dbReference type="InterPro" id="IPR006259">
    <property type="entry name" value="Adenyl_kin_sub"/>
</dbReference>
<dbReference type="InterPro" id="IPR000850">
    <property type="entry name" value="Adenylat/UMP-CMP_kin"/>
</dbReference>
<dbReference type="InterPro" id="IPR033690">
    <property type="entry name" value="Adenylat_kinase_CS"/>
</dbReference>
<dbReference type="InterPro" id="IPR007862">
    <property type="entry name" value="Adenylate_kinase_lid-dom"/>
</dbReference>
<dbReference type="InterPro" id="IPR028587">
    <property type="entry name" value="AK2"/>
</dbReference>
<dbReference type="InterPro" id="IPR027417">
    <property type="entry name" value="P-loop_NTPase"/>
</dbReference>
<dbReference type="NCBIfam" id="TIGR01351">
    <property type="entry name" value="adk"/>
    <property type="match status" value="1"/>
</dbReference>
<dbReference type="NCBIfam" id="NF001380">
    <property type="entry name" value="PRK00279.1-2"/>
    <property type="match status" value="1"/>
</dbReference>
<dbReference type="NCBIfam" id="NF001381">
    <property type="entry name" value="PRK00279.1-3"/>
    <property type="match status" value="1"/>
</dbReference>
<dbReference type="NCBIfam" id="NF011100">
    <property type="entry name" value="PRK14527.1"/>
    <property type="match status" value="1"/>
</dbReference>
<dbReference type="PANTHER" id="PTHR23359">
    <property type="entry name" value="NUCLEOTIDE KINASE"/>
    <property type="match status" value="1"/>
</dbReference>
<dbReference type="Pfam" id="PF00406">
    <property type="entry name" value="ADK"/>
    <property type="match status" value="1"/>
</dbReference>
<dbReference type="Pfam" id="PF05191">
    <property type="entry name" value="ADK_lid"/>
    <property type="match status" value="1"/>
</dbReference>
<dbReference type="PRINTS" id="PR00094">
    <property type="entry name" value="ADENYLTKNASE"/>
</dbReference>
<dbReference type="SUPFAM" id="SSF52540">
    <property type="entry name" value="P-loop containing nucleoside triphosphate hydrolases"/>
    <property type="match status" value="1"/>
</dbReference>
<dbReference type="PROSITE" id="PS00113">
    <property type="entry name" value="ADENYLATE_KINASE"/>
    <property type="match status" value="1"/>
</dbReference>
<protein>
    <recommendedName>
        <fullName evidence="1">Adenylate kinase</fullName>
        <ecNumber evidence="1">2.7.4.3</ecNumber>
    </recommendedName>
    <alternativeName>
        <fullName evidence="1">ATP-AMP transphosphorylase</fullName>
    </alternativeName>
    <alternativeName>
        <fullName evidence="1">ATP:AMP phosphotransferase</fullName>
    </alternativeName>
    <alternativeName>
        <fullName evidence="1">Adenylate kinase cytosolic and mitochondrial</fullName>
    </alternativeName>
    <alternativeName>
        <fullName evidence="1">Adenylate monophosphate kinase</fullName>
    </alternativeName>
</protein>
<comment type="function">
    <text evidence="1">Catalyzes the reversible transfer of the terminal phosphate group between ATP and AMP. Plays an important role in cellular energy homeostasis and in adenine nucleotide metabolism. Adenylate kinase activity is critical for regulation of the phosphate utilization and the AMP de novo biosynthesis pathways.</text>
</comment>
<comment type="catalytic activity">
    <reaction evidence="1">
        <text>AMP + ATP = 2 ADP</text>
        <dbReference type="Rhea" id="RHEA:12973"/>
        <dbReference type="ChEBI" id="CHEBI:30616"/>
        <dbReference type="ChEBI" id="CHEBI:456215"/>
        <dbReference type="ChEBI" id="CHEBI:456216"/>
        <dbReference type="EC" id="2.7.4.3"/>
    </reaction>
</comment>
<comment type="subunit">
    <text evidence="1">Monomer.</text>
</comment>
<comment type="subcellular location">
    <subcellularLocation>
        <location evidence="1">Cytoplasm</location>
        <location evidence="1">Cytosol</location>
    </subcellularLocation>
    <subcellularLocation>
        <location evidence="1">Mitochondrion intermembrane space</location>
    </subcellularLocation>
    <text evidence="1">Predominantly mitochondrial.</text>
</comment>
<comment type="domain">
    <text evidence="1">Consists of three domains, a large central CORE domain and two small peripheral domains, NMPbind and LID, which undergo movements during catalysis. The LID domain closes over the site of phosphoryl transfer upon ATP binding. Assembling and dissambling the active center during each catalytic cycle provides an effective means to prevent ATP hydrolysis.</text>
</comment>
<comment type="similarity">
    <text evidence="1">Belongs to the adenylate kinase family. AK2 subfamily.</text>
</comment>
<comment type="sequence caution" evidence="2">
    <conflict type="erroneous initiation">
        <sequence resource="EMBL-CDS" id="BAE61095"/>
    </conflict>
</comment>
<proteinExistence type="inferred from homology"/>
<keyword id="KW-0067">ATP-binding</keyword>
<keyword id="KW-0963">Cytoplasm</keyword>
<keyword id="KW-0418">Kinase</keyword>
<keyword id="KW-0496">Mitochondrion</keyword>
<keyword id="KW-0547">Nucleotide-binding</keyword>
<keyword id="KW-1185">Reference proteome</keyword>
<keyword id="KW-0808">Transferase</keyword>
<feature type="chain" id="PRO_0000365663" description="Adenylate kinase">
    <location>
        <begin position="1"/>
        <end position="258"/>
    </location>
</feature>
<feature type="region of interest" description="NMP" evidence="1">
    <location>
        <begin position="72"/>
        <end position="101"/>
    </location>
</feature>
<feature type="region of interest" description="LID" evidence="1">
    <location>
        <begin position="169"/>
        <end position="206"/>
    </location>
</feature>
<feature type="binding site" evidence="1">
    <location>
        <begin position="52"/>
        <end position="57"/>
    </location>
    <ligand>
        <name>ATP</name>
        <dbReference type="ChEBI" id="CHEBI:30616"/>
    </ligand>
</feature>
<feature type="binding site" evidence="1">
    <location>
        <position position="73"/>
    </location>
    <ligand>
        <name>AMP</name>
        <dbReference type="ChEBI" id="CHEBI:456215"/>
    </ligand>
</feature>
<feature type="binding site" evidence="1">
    <location>
        <position position="78"/>
    </location>
    <ligand>
        <name>AMP</name>
        <dbReference type="ChEBI" id="CHEBI:456215"/>
    </ligand>
</feature>
<feature type="binding site" evidence="1">
    <location>
        <begin position="99"/>
        <end position="101"/>
    </location>
    <ligand>
        <name>AMP</name>
        <dbReference type="ChEBI" id="CHEBI:456215"/>
    </ligand>
</feature>
<feature type="binding site" evidence="1">
    <location>
        <begin position="128"/>
        <end position="131"/>
    </location>
    <ligand>
        <name>AMP</name>
        <dbReference type="ChEBI" id="CHEBI:456215"/>
    </ligand>
</feature>
<feature type="binding site" evidence="1">
    <location>
        <position position="135"/>
    </location>
    <ligand>
        <name>AMP</name>
        <dbReference type="ChEBI" id="CHEBI:456215"/>
    </ligand>
</feature>
<feature type="binding site" evidence="1">
    <location>
        <position position="170"/>
    </location>
    <ligand>
        <name>ATP</name>
        <dbReference type="ChEBI" id="CHEBI:30616"/>
    </ligand>
</feature>
<feature type="binding site" evidence="1">
    <location>
        <begin position="179"/>
        <end position="180"/>
    </location>
    <ligand>
        <name>ATP</name>
        <dbReference type="ChEBI" id="CHEBI:30616"/>
    </ligand>
</feature>
<feature type="binding site" evidence="1">
    <location>
        <position position="203"/>
    </location>
    <ligand>
        <name>AMP</name>
        <dbReference type="ChEBI" id="CHEBI:456215"/>
    </ligand>
</feature>
<feature type="binding site" evidence="1">
    <location>
        <position position="214"/>
    </location>
    <ligand>
        <name>AMP</name>
        <dbReference type="ChEBI" id="CHEBI:456215"/>
    </ligand>
</feature>
<feature type="binding site" evidence="1">
    <location>
        <position position="242"/>
    </location>
    <ligand>
        <name>ATP</name>
        <dbReference type="ChEBI" id="CHEBI:30616"/>
    </ligand>
</feature>
<evidence type="ECO:0000255" key="1">
    <source>
        <dbReference type="HAMAP-Rule" id="MF_03168"/>
    </source>
</evidence>
<evidence type="ECO:0000305" key="2"/>
<gene>
    <name type="primary">adk1</name>
    <name type="ORF">AO090012001004</name>
</gene>
<reference key="1">
    <citation type="journal article" date="2005" name="Nature">
        <title>Genome sequencing and analysis of Aspergillus oryzae.</title>
        <authorList>
            <person name="Machida M."/>
            <person name="Asai K."/>
            <person name="Sano M."/>
            <person name="Tanaka T."/>
            <person name="Kumagai T."/>
            <person name="Terai G."/>
            <person name="Kusumoto K."/>
            <person name="Arima T."/>
            <person name="Akita O."/>
            <person name="Kashiwagi Y."/>
            <person name="Abe K."/>
            <person name="Gomi K."/>
            <person name="Horiuchi H."/>
            <person name="Kitamoto K."/>
            <person name="Kobayashi T."/>
            <person name="Takeuchi M."/>
            <person name="Denning D.W."/>
            <person name="Galagan J.E."/>
            <person name="Nierman W.C."/>
            <person name="Yu J."/>
            <person name="Archer D.B."/>
            <person name="Bennett J.W."/>
            <person name="Bhatnagar D."/>
            <person name="Cleveland T.E."/>
            <person name="Fedorova N.D."/>
            <person name="Gotoh O."/>
            <person name="Horikawa H."/>
            <person name="Hosoyama A."/>
            <person name="Ichinomiya M."/>
            <person name="Igarashi R."/>
            <person name="Iwashita K."/>
            <person name="Juvvadi P.R."/>
            <person name="Kato M."/>
            <person name="Kato Y."/>
            <person name="Kin T."/>
            <person name="Kokubun A."/>
            <person name="Maeda H."/>
            <person name="Maeyama N."/>
            <person name="Maruyama J."/>
            <person name="Nagasaki H."/>
            <person name="Nakajima T."/>
            <person name="Oda K."/>
            <person name="Okada K."/>
            <person name="Paulsen I."/>
            <person name="Sakamoto K."/>
            <person name="Sawano T."/>
            <person name="Takahashi M."/>
            <person name="Takase K."/>
            <person name="Terabayashi Y."/>
            <person name="Wortman J.R."/>
            <person name="Yamada O."/>
            <person name="Yamagata Y."/>
            <person name="Anazawa H."/>
            <person name="Hata Y."/>
            <person name="Koide Y."/>
            <person name="Komori T."/>
            <person name="Koyama Y."/>
            <person name="Minetoki T."/>
            <person name="Suharnan S."/>
            <person name="Tanaka A."/>
            <person name="Isono K."/>
            <person name="Kuhara S."/>
            <person name="Ogasawara N."/>
            <person name="Kikuchi H."/>
        </authorList>
    </citation>
    <scope>NUCLEOTIDE SEQUENCE [LARGE SCALE GENOMIC DNA]</scope>
    <source>
        <strain>ATCC 42149 / RIB 40</strain>
    </source>
</reference>